<protein>
    <recommendedName>
        <fullName evidence="1">3-ketoacyl-CoA thiolase</fullName>
        <ecNumber evidence="1">2.3.1.16</ecNumber>
    </recommendedName>
    <alternativeName>
        <fullName evidence="1">Acetyl-CoA acyltransferase</fullName>
    </alternativeName>
    <alternativeName>
        <fullName evidence="1">Beta-ketothiolase</fullName>
    </alternativeName>
    <alternativeName>
        <fullName evidence="1">Fatty acid oxidation complex subunit beta</fullName>
    </alternativeName>
</protein>
<name>FADA_SHIBS</name>
<sequence>MEQVVIVDAIRTPMGRSKGGAFRNVRAEDLSAHLMRSLLARNPALEAAALDDIYWGCVQQTLEQGFNIARNAALLAEVPHSVPAVTVNRLCGSSMQALHDAARMIMTGDAQACLVGGVEHMGHVPMSHGVDFHPGLSRNVAKAAGMMGLTAEMLARMHGISREMQDAFAARSHARAWAATQSGAFKNEIIPTGGHDADGVLKQFNYDEVIRPETTVEALATLRPAFDPVNGTVTAGTSSALSDGAAAMLVMSESRAHELGLKPRARVRSMAVVGCNPSIMGYGPVPASKLALKKAGLSASDIGVFEMNEAFAAQILPCIKDLGLMEQIDEKINLNGGAIALGHPLGCSGARISTTLLNLMERKDVQFGLATMCIGLGQGIATVFERV</sequence>
<accession>Q31UE3</accession>
<feature type="chain" id="PRO_0000292908" description="3-ketoacyl-CoA thiolase">
    <location>
        <begin position="1"/>
        <end position="387"/>
    </location>
</feature>
<feature type="active site" description="Acyl-thioester intermediate" evidence="1">
    <location>
        <position position="91"/>
    </location>
</feature>
<feature type="active site" description="Proton acceptor" evidence="1">
    <location>
        <position position="343"/>
    </location>
</feature>
<feature type="active site" description="Proton acceptor" evidence="1">
    <location>
        <position position="373"/>
    </location>
</feature>
<keyword id="KW-0012">Acyltransferase</keyword>
<keyword id="KW-0963">Cytoplasm</keyword>
<keyword id="KW-0276">Fatty acid metabolism</keyword>
<keyword id="KW-0442">Lipid degradation</keyword>
<keyword id="KW-0443">Lipid metabolism</keyword>
<keyword id="KW-0808">Transferase</keyword>
<comment type="function">
    <text evidence="1">Catalyzes the final step of fatty acid oxidation in which acetyl-CoA is released and the CoA ester of a fatty acid two carbons shorter is formed.</text>
</comment>
<comment type="catalytic activity">
    <reaction evidence="1">
        <text>an acyl-CoA + acetyl-CoA = a 3-oxoacyl-CoA + CoA</text>
        <dbReference type="Rhea" id="RHEA:21564"/>
        <dbReference type="ChEBI" id="CHEBI:57287"/>
        <dbReference type="ChEBI" id="CHEBI:57288"/>
        <dbReference type="ChEBI" id="CHEBI:58342"/>
        <dbReference type="ChEBI" id="CHEBI:90726"/>
        <dbReference type="EC" id="2.3.1.16"/>
    </reaction>
</comment>
<comment type="pathway">
    <text evidence="1">Lipid metabolism; fatty acid beta-oxidation.</text>
</comment>
<comment type="subunit">
    <text evidence="1">Heterotetramer of two alpha chains (FadB) and two beta chains (FadA).</text>
</comment>
<comment type="subcellular location">
    <subcellularLocation>
        <location evidence="1">Cytoplasm</location>
    </subcellularLocation>
</comment>
<comment type="similarity">
    <text evidence="1">Belongs to the thiolase-like superfamily. Thiolase family.</text>
</comment>
<dbReference type="EC" id="2.3.1.16" evidence="1"/>
<dbReference type="EMBL" id="CP000036">
    <property type="protein sequence ID" value="ABB68315.1"/>
    <property type="molecule type" value="Genomic_DNA"/>
</dbReference>
<dbReference type="RefSeq" id="WP_000438738.1">
    <property type="nucleotide sequence ID" value="NC_007613.1"/>
</dbReference>
<dbReference type="SMR" id="Q31UE3"/>
<dbReference type="KEGG" id="sbo:SBO_3857"/>
<dbReference type="HOGENOM" id="CLU_031026_2_3_6"/>
<dbReference type="UniPathway" id="UPA00659"/>
<dbReference type="Proteomes" id="UP000007067">
    <property type="component" value="Chromosome"/>
</dbReference>
<dbReference type="GO" id="GO:0005737">
    <property type="term" value="C:cytoplasm"/>
    <property type="evidence" value="ECO:0007669"/>
    <property type="project" value="UniProtKB-SubCell"/>
</dbReference>
<dbReference type="GO" id="GO:0003988">
    <property type="term" value="F:acetyl-CoA C-acyltransferase activity"/>
    <property type="evidence" value="ECO:0007669"/>
    <property type="project" value="UniProtKB-UniRule"/>
</dbReference>
<dbReference type="GO" id="GO:0006635">
    <property type="term" value="P:fatty acid beta-oxidation"/>
    <property type="evidence" value="ECO:0007669"/>
    <property type="project" value="UniProtKB-UniRule"/>
</dbReference>
<dbReference type="GO" id="GO:0010124">
    <property type="term" value="P:phenylacetate catabolic process"/>
    <property type="evidence" value="ECO:0007669"/>
    <property type="project" value="TreeGrafter"/>
</dbReference>
<dbReference type="CDD" id="cd00751">
    <property type="entry name" value="thiolase"/>
    <property type="match status" value="1"/>
</dbReference>
<dbReference type="FunFam" id="3.40.47.10:FF:000010">
    <property type="entry name" value="Acetyl-CoA acetyltransferase (Thiolase)"/>
    <property type="match status" value="1"/>
</dbReference>
<dbReference type="Gene3D" id="3.40.47.10">
    <property type="match status" value="2"/>
</dbReference>
<dbReference type="HAMAP" id="MF_01620">
    <property type="entry name" value="FadA"/>
    <property type="match status" value="1"/>
</dbReference>
<dbReference type="InterPro" id="IPR012805">
    <property type="entry name" value="FadA"/>
</dbReference>
<dbReference type="InterPro" id="IPR002155">
    <property type="entry name" value="Thiolase"/>
</dbReference>
<dbReference type="InterPro" id="IPR016039">
    <property type="entry name" value="Thiolase-like"/>
</dbReference>
<dbReference type="InterPro" id="IPR050215">
    <property type="entry name" value="Thiolase-like_sf_Thiolase"/>
</dbReference>
<dbReference type="InterPro" id="IPR020615">
    <property type="entry name" value="Thiolase_acyl_enz_int_AS"/>
</dbReference>
<dbReference type="InterPro" id="IPR020610">
    <property type="entry name" value="Thiolase_AS"/>
</dbReference>
<dbReference type="InterPro" id="IPR020617">
    <property type="entry name" value="Thiolase_C"/>
</dbReference>
<dbReference type="InterPro" id="IPR020613">
    <property type="entry name" value="Thiolase_CS"/>
</dbReference>
<dbReference type="InterPro" id="IPR020616">
    <property type="entry name" value="Thiolase_N"/>
</dbReference>
<dbReference type="NCBIfam" id="TIGR01930">
    <property type="entry name" value="AcCoA-C-Actrans"/>
    <property type="match status" value="1"/>
</dbReference>
<dbReference type="NCBIfam" id="TIGR02445">
    <property type="entry name" value="fadA"/>
    <property type="match status" value="1"/>
</dbReference>
<dbReference type="NCBIfam" id="NF006510">
    <property type="entry name" value="PRK08947.1"/>
    <property type="match status" value="1"/>
</dbReference>
<dbReference type="PANTHER" id="PTHR43853:SF11">
    <property type="entry name" value="3-KETOACYL-COA THIOLASE FADA"/>
    <property type="match status" value="1"/>
</dbReference>
<dbReference type="PANTHER" id="PTHR43853">
    <property type="entry name" value="3-KETOACYL-COA THIOLASE, PEROXISOMAL"/>
    <property type="match status" value="1"/>
</dbReference>
<dbReference type="Pfam" id="PF02803">
    <property type="entry name" value="Thiolase_C"/>
    <property type="match status" value="1"/>
</dbReference>
<dbReference type="Pfam" id="PF00108">
    <property type="entry name" value="Thiolase_N"/>
    <property type="match status" value="1"/>
</dbReference>
<dbReference type="PIRSF" id="PIRSF000429">
    <property type="entry name" value="Ac-CoA_Ac_transf"/>
    <property type="match status" value="1"/>
</dbReference>
<dbReference type="SUPFAM" id="SSF53901">
    <property type="entry name" value="Thiolase-like"/>
    <property type="match status" value="2"/>
</dbReference>
<dbReference type="PROSITE" id="PS00098">
    <property type="entry name" value="THIOLASE_1"/>
    <property type="match status" value="1"/>
</dbReference>
<dbReference type="PROSITE" id="PS00737">
    <property type="entry name" value="THIOLASE_2"/>
    <property type="match status" value="1"/>
</dbReference>
<dbReference type="PROSITE" id="PS00099">
    <property type="entry name" value="THIOLASE_3"/>
    <property type="match status" value="1"/>
</dbReference>
<gene>
    <name evidence="1" type="primary">fadA</name>
    <name type="ordered locus">SBO_3857</name>
</gene>
<proteinExistence type="inferred from homology"/>
<organism>
    <name type="scientific">Shigella boydii serotype 4 (strain Sb227)</name>
    <dbReference type="NCBI Taxonomy" id="300268"/>
    <lineage>
        <taxon>Bacteria</taxon>
        <taxon>Pseudomonadati</taxon>
        <taxon>Pseudomonadota</taxon>
        <taxon>Gammaproteobacteria</taxon>
        <taxon>Enterobacterales</taxon>
        <taxon>Enterobacteriaceae</taxon>
        <taxon>Shigella</taxon>
    </lineage>
</organism>
<evidence type="ECO:0000255" key="1">
    <source>
        <dbReference type="HAMAP-Rule" id="MF_01620"/>
    </source>
</evidence>
<reference key="1">
    <citation type="journal article" date="2005" name="Nucleic Acids Res.">
        <title>Genome dynamics and diversity of Shigella species, the etiologic agents of bacillary dysentery.</title>
        <authorList>
            <person name="Yang F."/>
            <person name="Yang J."/>
            <person name="Zhang X."/>
            <person name="Chen L."/>
            <person name="Jiang Y."/>
            <person name="Yan Y."/>
            <person name="Tang X."/>
            <person name="Wang J."/>
            <person name="Xiong Z."/>
            <person name="Dong J."/>
            <person name="Xue Y."/>
            <person name="Zhu Y."/>
            <person name="Xu X."/>
            <person name="Sun L."/>
            <person name="Chen S."/>
            <person name="Nie H."/>
            <person name="Peng J."/>
            <person name="Xu J."/>
            <person name="Wang Y."/>
            <person name="Yuan Z."/>
            <person name="Wen Y."/>
            <person name="Yao Z."/>
            <person name="Shen Y."/>
            <person name="Qiang B."/>
            <person name="Hou Y."/>
            <person name="Yu J."/>
            <person name="Jin Q."/>
        </authorList>
    </citation>
    <scope>NUCLEOTIDE SEQUENCE [LARGE SCALE GENOMIC DNA]</scope>
    <source>
        <strain>Sb227</strain>
    </source>
</reference>